<evidence type="ECO:0000255" key="1">
    <source>
        <dbReference type="HAMAP-Rule" id="MF_00065"/>
    </source>
</evidence>
<name>CYSC_SHESW</name>
<keyword id="KW-0067">ATP-binding</keyword>
<keyword id="KW-0418">Kinase</keyword>
<keyword id="KW-0547">Nucleotide-binding</keyword>
<keyword id="KW-0597">Phosphoprotein</keyword>
<keyword id="KW-0808">Transferase</keyword>
<dbReference type="EC" id="2.7.1.25" evidence="1"/>
<dbReference type="EMBL" id="CP000503">
    <property type="protein sequence ID" value="ABM23755.1"/>
    <property type="molecule type" value="Genomic_DNA"/>
</dbReference>
<dbReference type="RefSeq" id="WP_011788282.1">
    <property type="nucleotide sequence ID" value="NC_008750.1"/>
</dbReference>
<dbReference type="SMR" id="A1RGG0"/>
<dbReference type="GeneID" id="67444621"/>
<dbReference type="KEGG" id="shw:Sputw3181_0905"/>
<dbReference type="HOGENOM" id="CLU_046932_1_0_6"/>
<dbReference type="UniPathway" id="UPA00140">
    <property type="reaction ID" value="UER00205"/>
</dbReference>
<dbReference type="Proteomes" id="UP000002597">
    <property type="component" value="Chromosome"/>
</dbReference>
<dbReference type="GO" id="GO:0004020">
    <property type="term" value="F:adenylylsulfate kinase activity"/>
    <property type="evidence" value="ECO:0007669"/>
    <property type="project" value="UniProtKB-UniRule"/>
</dbReference>
<dbReference type="GO" id="GO:0005524">
    <property type="term" value="F:ATP binding"/>
    <property type="evidence" value="ECO:0007669"/>
    <property type="project" value="UniProtKB-UniRule"/>
</dbReference>
<dbReference type="GO" id="GO:0070814">
    <property type="term" value="P:hydrogen sulfide biosynthetic process"/>
    <property type="evidence" value="ECO:0007669"/>
    <property type="project" value="UniProtKB-UniRule"/>
</dbReference>
<dbReference type="GO" id="GO:0000103">
    <property type="term" value="P:sulfate assimilation"/>
    <property type="evidence" value="ECO:0007669"/>
    <property type="project" value="UniProtKB-UniRule"/>
</dbReference>
<dbReference type="CDD" id="cd02027">
    <property type="entry name" value="APSK"/>
    <property type="match status" value="1"/>
</dbReference>
<dbReference type="FunFam" id="3.40.50.300:FF:000212">
    <property type="entry name" value="Adenylyl-sulfate kinase"/>
    <property type="match status" value="1"/>
</dbReference>
<dbReference type="Gene3D" id="3.40.50.300">
    <property type="entry name" value="P-loop containing nucleotide triphosphate hydrolases"/>
    <property type="match status" value="1"/>
</dbReference>
<dbReference type="HAMAP" id="MF_00065">
    <property type="entry name" value="Adenylyl_sulf_kinase"/>
    <property type="match status" value="1"/>
</dbReference>
<dbReference type="InterPro" id="IPR002891">
    <property type="entry name" value="APS_kinase"/>
</dbReference>
<dbReference type="InterPro" id="IPR027417">
    <property type="entry name" value="P-loop_NTPase"/>
</dbReference>
<dbReference type="NCBIfam" id="TIGR00455">
    <property type="entry name" value="apsK"/>
    <property type="match status" value="1"/>
</dbReference>
<dbReference type="NCBIfam" id="NF003013">
    <property type="entry name" value="PRK03846.1"/>
    <property type="match status" value="1"/>
</dbReference>
<dbReference type="PANTHER" id="PTHR11055:SF63">
    <property type="entry name" value="ADENYLYL-SULFATE KINASE 1, CHLOROPLASTIC"/>
    <property type="match status" value="1"/>
</dbReference>
<dbReference type="PANTHER" id="PTHR11055">
    <property type="entry name" value="BIFUNCTIONAL 3'-PHOSPHOADENOSINE 5'-PHOSPHOSULFATE SYNTHASE"/>
    <property type="match status" value="1"/>
</dbReference>
<dbReference type="Pfam" id="PF01583">
    <property type="entry name" value="APS_kinase"/>
    <property type="match status" value="1"/>
</dbReference>
<dbReference type="SUPFAM" id="SSF52540">
    <property type="entry name" value="P-loop containing nucleoside triphosphate hydrolases"/>
    <property type="match status" value="1"/>
</dbReference>
<organism>
    <name type="scientific">Shewanella sp. (strain W3-18-1)</name>
    <dbReference type="NCBI Taxonomy" id="351745"/>
    <lineage>
        <taxon>Bacteria</taxon>
        <taxon>Pseudomonadati</taxon>
        <taxon>Pseudomonadota</taxon>
        <taxon>Gammaproteobacteria</taxon>
        <taxon>Alteromonadales</taxon>
        <taxon>Shewanellaceae</taxon>
        <taxon>Shewanella</taxon>
    </lineage>
</organism>
<gene>
    <name evidence="1" type="primary">cysC</name>
    <name type="ordered locus">Sputw3181_0905</name>
</gene>
<accession>A1RGG0</accession>
<protein>
    <recommendedName>
        <fullName evidence="1">Adenylyl-sulfate kinase</fullName>
        <ecNumber evidence="1">2.7.1.25</ecNumber>
    </recommendedName>
    <alternativeName>
        <fullName evidence="1">APS kinase</fullName>
    </alternativeName>
    <alternativeName>
        <fullName evidence="1">ATP adenosine-5'-phosphosulfate 3'-phosphotransferase</fullName>
    </alternativeName>
    <alternativeName>
        <fullName evidence="1">Adenosine-5'-phosphosulfate kinase</fullName>
    </alternativeName>
</protein>
<sequence length="205" mass="22336">MTNIVWHQHPVDQAARAEQKGQNPVLLWFTGLSGAGKSTLAGALERALFEAGFHTYLLDGDNVRHGLCKDLGFTVEDRDENLRRVGEVAKLMVDAGLVVLSAFISPTREERDGIRARFPAGQFIEVHVSTPLSVCEQRDPKGLYVKARSGEISNFTGISSPYEAPLAAELTIDTSKGDLATQVRALIDYLTAINVINTDKTKTVA</sequence>
<proteinExistence type="inferred from homology"/>
<reference key="1">
    <citation type="submission" date="2006-12" db="EMBL/GenBank/DDBJ databases">
        <title>Complete sequence of Shewanella sp. W3-18-1.</title>
        <authorList>
            <consortium name="US DOE Joint Genome Institute"/>
            <person name="Copeland A."/>
            <person name="Lucas S."/>
            <person name="Lapidus A."/>
            <person name="Barry K."/>
            <person name="Detter J.C."/>
            <person name="Glavina del Rio T."/>
            <person name="Hammon N."/>
            <person name="Israni S."/>
            <person name="Dalin E."/>
            <person name="Tice H."/>
            <person name="Pitluck S."/>
            <person name="Chain P."/>
            <person name="Malfatti S."/>
            <person name="Shin M."/>
            <person name="Vergez L."/>
            <person name="Schmutz J."/>
            <person name="Larimer F."/>
            <person name="Land M."/>
            <person name="Hauser L."/>
            <person name="Kyrpides N."/>
            <person name="Lykidis A."/>
            <person name="Tiedje J."/>
            <person name="Richardson P."/>
        </authorList>
    </citation>
    <scope>NUCLEOTIDE SEQUENCE [LARGE SCALE GENOMIC DNA]</scope>
    <source>
        <strain>W3-18-1</strain>
    </source>
</reference>
<feature type="chain" id="PRO_1000009030" description="Adenylyl-sulfate kinase">
    <location>
        <begin position="1"/>
        <end position="205"/>
    </location>
</feature>
<feature type="active site" description="Phosphoserine intermediate" evidence="1">
    <location>
        <position position="105"/>
    </location>
</feature>
<feature type="binding site" evidence="1">
    <location>
        <begin position="31"/>
        <end position="38"/>
    </location>
    <ligand>
        <name>ATP</name>
        <dbReference type="ChEBI" id="CHEBI:30616"/>
    </ligand>
</feature>
<comment type="function">
    <text evidence="1">Catalyzes the synthesis of activated sulfate.</text>
</comment>
<comment type="catalytic activity">
    <reaction evidence="1">
        <text>adenosine 5'-phosphosulfate + ATP = 3'-phosphoadenylyl sulfate + ADP + H(+)</text>
        <dbReference type="Rhea" id="RHEA:24152"/>
        <dbReference type="ChEBI" id="CHEBI:15378"/>
        <dbReference type="ChEBI" id="CHEBI:30616"/>
        <dbReference type="ChEBI" id="CHEBI:58243"/>
        <dbReference type="ChEBI" id="CHEBI:58339"/>
        <dbReference type="ChEBI" id="CHEBI:456216"/>
        <dbReference type="EC" id="2.7.1.25"/>
    </reaction>
</comment>
<comment type="pathway">
    <text evidence="1">Sulfur metabolism; hydrogen sulfide biosynthesis; sulfite from sulfate: step 2/3.</text>
</comment>
<comment type="similarity">
    <text evidence="1">Belongs to the APS kinase family.</text>
</comment>